<organism evidence="11">
    <name type="scientific">Caenorhabditis elegans</name>
    <dbReference type="NCBI Taxonomy" id="6239"/>
    <lineage>
        <taxon>Eukaryota</taxon>
        <taxon>Metazoa</taxon>
        <taxon>Ecdysozoa</taxon>
        <taxon>Nematoda</taxon>
        <taxon>Chromadorea</taxon>
        <taxon>Rhabditida</taxon>
        <taxon>Rhabditina</taxon>
        <taxon>Rhabditomorpha</taxon>
        <taxon>Rhabditoidea</taxon>
        <taxon>Rhabditidae</taxon>
        <taxon>Peloderinae</taxon>
        <taxon>Caenorhabditis</taxon>
    </lineage>
</organism>
<accession>Q18534</accession>
<feature type="chain" id="PRO_0000454188" description="Neuropeptide receptor npr-1">
    <location>
        <begin position="1"/>
        <end position="457"/>
    </location>
</feature>
<feature type="topological domain" description="Extracellular" evidence="10">
    <location>
        <begin position="1"/>
        <end position="22"/>
    </location>
</feature>
<feature type="transmembrane region" description="Helical; Name=1" evidence="1">
    <location>
        <begin position="23"/>
        <end position="43"/>
    </location>
</feature>
<feature type="topological domain" description="Cytoplasmic" evidence="10">
    <location>
        <begin position="44"/>
        <end position="62"/>
    </location>
</feature>
<feature type="transmembrane region" description="Helical; Name=2" evidence="1">
    <location>
        <begin position="63"/>
        <end position="83"/>
    </location>
</feature>
<feature type="topological domain" description="Extracellular" evidence="10">
    <location>
        <begin position="84"/>
        <end position="100"/>
    </location>
</feature>
<feature type="transmembrane region" description="Helical; Name=3" evidence="1">
    <location>
        <begin position="101"/>
        <end position="121"/>
    </location>
</feature>
<feature type="topological domain" description="Cytoplasmic" evidence="10">
    <location>
        <begin position="122"/>
        <end position="140"/>
    </location>
</feature>
<feature type="transmembrane region" description="Helical; Name=4" evidence="1">
    <location>
        <begin position="141"/>
        <end position="161"/>
    </location>
</feature>
<feature type="topological domain" description="Extracellular" evidence="10">
    <location>
        <begin position="162"/>
        <end position="193"/>
    </location>
</feature>
<feature type="transmembrane region" description="Helical; Name=5" evidence="1">
    <location>
        <begin position="194"/>
        <end position="214"/>
    </location>
</feature>
<feature type="topological domain" description="Cytoplasmic" evidence="10">
    <location>
        <begin position="215"/>
        <end position="279"/>
    </location>
</feature>
<feature type="transmembrane region" description="Helical; Name=6" evidence="1">
    <location>
        <begin position="280"/>
        <end position="300"/>
    </location>
</feature>
<feature type="topological domain" description="Extracellular" evidence="10">
    <location>
        <begin position="301"/>
        <end position="324"/>
    </location>
</feature>
<feature type="transmembrane region" description="Helical; Name=7" evidence="1">
    <location>
        <begin position="325"/>
        <end position="345"/>
    </location>
</feature>
<feature type="topological domain" description="Cytoplasmic" evidence="10">
    <location>
        <begin position="346"/>
        <end position="457"/>
    </location>
</feature>
<feature type="disulfide bond" evidence="10">
    <location>
        <begin position="99"/>
        <end position="178"/>
    </location>
</feature>
<feature type="mutagenesis site" description="In ky13; clumping behavior. Abnormally active during the sleep-like state called lethargus, which occurs during molting between larval and adult stages; normal quiescence restored in FMRFamide peptide receptor frpr-18 mutant background." evidence="5 6">
    <location>
        <begin position="61"/>
        <end position="457"/>
    </location>
</feature>
<feature type="mutagenesis site" description="In ad609; clumping behavior; when associated with A-144." evidence="6">
    <original>T</original>
    <variation>I</variation>
    <location>
        <position position="83"/>
    </location>
</feature>
<feature type="mutagenesis site" description="In n1353; clumping behavior." evidence="6">
    <original>G</original>
    <variation>D</variation>
    <location>
        <position position="118"/>
    </location>
</feature>
<feature type="mutagenesis site" description="In ad609; clumping behavior; when associated with I-83." evidence="6">
    <original>T</original>
    <variation>A</variation>
    <location>
        <position position="144"/>
    </location>
</feature>
<feature type="mutagenesis site" description="Clumping behavior; behavior more similar to many wild-isolated strains of C.elegans than the laboratory reference Bristol N2 strain. Binds GLGPRPLRF-amide flp-21 peptide with lower affinity, in vitro. Not activated by EMPGVLRF-amide flp-18 peptide, in vitro." evidence="2 3 6">
    <original>V</original>
    <variation>F</variation>
    <location>
        <position position="215"/>
    </location>
</feature>
<evidence type="ECO:0000255" key="1"/>
<evidence type="ECO:0000269" key="2">
    <source>
    </source>
</evidence>
<evidence type="ECO:0000269" key="3">
    <source>
    </source>
</evidence>
<evidence type="ECO:0000269" key="4">
    <source>
    </source>
</evidence>
<evidence type="ECO:0000269" key="5">
    <source>
    </source>
</evidence>
<evidence type="ECO:0000269" key="6">
    <source>
    </source>
</evidence>
<evidence type="ECO:0000303" key="7">
    <source>
    </source>
</evidence>
<evidence type="ECO:0000303" key="8">
    <source>
    </source>
</evidence>
<evidence type="ECO:0000303" key="9">
    <source>
    </source>
</evidence>
<evidence type="ECO:0000305" key="10"/>
<evidence type="ECO:0000312" key="11">
    <source>
        <dbReference type="Proteomes" id="UP000001940"/>
    </source>
</evidence>
<evidence type="ECO:0000312" key="12">
    <source>
        <dbReference type="WormBase" id="C39E6.6"/>
    </source>
</evidence>
<keyword id="KW-1015">Disulfide bond</keyword>
<keyword id="KW-0297">G-protein coupled receptor</keyword>
<keyword id="KW-0472">Membrane</keyword>
<keyword id="KW-0675">Receptor</keyword>
<keyword id="KW-1185">Reference proteome</keyword>
<keyword id="KW-0807">Transducer</keyword>
<keyword id="KW-0812">Transmembrane</keyword>
<keyword id="KW-1133">Transmembrane helix</keyword>
<gene>
    <name evidence="12" type="primary">npr-1</name>
    <name evidence="7" type="synonym">AF9-R1</name>
    <name evidence="12" type="ORF">C39E6.6</name>
</gene>
<protein>
    <recommendedName>
        <fullName evidence="12">Neuropeptide receptor npr-1</fullName>
    </recommendedName>
    <alternativeName>
        <fullName evidence="9">Neuropeptide Y receptor homolog npr-1</fullName>
    </alternativeName>
</protein>
<name>NPR1_CAEEL</name>
<dbReference type="EMBL" id="BX284606">
    <property type="protein sequence ID" value="CCD67081.1"/>
    <property type="molecule type" value="Genomic_DNA"/>
</dbReference>
<dbReference type="PIR" id="T29741">
    <property type="entry name" value="T29741"/>
</dbReference>
<dbReference type="RefSeq" id="NP_508816.1">
    <property type="nucleotide sequence ID" value="NM_076415.6"/>
</dbReference>
<dbReference type="SMR" id="Q18534"/>
<dbReference type="FunCoup" id="Q18534">
    <property type="interactions" value="11"/>
</dbReference>
<dbReference type="STRING" id="6239.C39E6.6.1"/>
<dbReference type="PaxDb" id="6239-C39E6.6"/>
<dbReference type="EnsemblMetazoa" id="C39E6.6.1">
    <property type="protein sequence ID" value="C39E6.6.1"/>
    <property type="gene ID" value="WBGene00003807"/>
</dbReference>
<dbReference type="GeneID" id="180752"/>
<dbReference type="KEGG" id="cel:CELE_C39E6.6"/>
<dbReference type="UCSC" id="C39E6.6">
    <property type="organism name" value="c. elegans"/>
</dbReference>
<dbReference type="AGR" id="WB:WBGene00003807"/>
<dbReference type="CTD" id="180752"/>
<dbReference type="WormBase" id="C39E6.6">
    <property type="protein sequence ID" value="CE06941"/>
    <property type="gene ID" value="WBGene00003807"/>
    <property type="gene designation" value="npr-1"/>
</dbReference>
<dbReference type="eggNOG" id="KOG3656">
    <property type="taxonomic scope" value="Eukaryota"/>
</dbReference>
<dbReference type="HOGENOM" id="CLU_009579_6_1_1"/>
<dbReference type="InParanoid" id="Q18534"/>
<dbReference type="OMA" id="LPYAFNM"/>
<dbReference type="OrthoDB" id="9046662at2759"/>
<dbReference type="PhylomeDB" id="Q18534"/>
<dbReference type="PRO" id="PR:Q18534"/>
<dbReference type="Proteomes" id="UP000001940">
    <property type="component" value="Chromosome X"/>
</dbReference>
<dbReference type="Bgee" id="WBGene00003807">
    <property type="expression patterns" value="Expressed in larva and 1 other cell type or tissue"/>
</dbReference>
<dbReference type="GO" id="GO:0030424">
    <property type="term" value="C:axon"/>
    <property type="evidence" value="ECO:0000314"/>
    <property type="project" value="WormBase"/>
</dbReference>
<dbReference type="GO" id="GO:0030425">
    <property type="term" value="C:dendrite"/>
    <property type="evidence" value="ECO:0000314"/>
    <property type="project" value="WormBase"/>
</dbReference>
<dbReference type="GO" id="GO:0043005">
    <property type="term" value="C:neuron projection"/>
    <property type="evidence" value="ECO:0000318"/>
    <property type="project" value="GO_Central"/>
</dbReference>
<dbReference type="GO" id="GO:0043025">
    <property type="term" value="C:neuronal cell body"/>
    <property type="evidence" value="ECO:0000314"/>
    <property type="project" value="WormBase"/>
</dbReference>
<dbReference type="GO" id="GO:0005886">
    <property type="term" value="C:plasma membrane"/>
    <property type="evidence" value="ECO:0000314"/>
    <property type="project" value="WormBase"/>
</dbReference>
<dbReference type="GO" id="GO:0042923">
    <property type="term" value="F:neuropeptide binding"/>
    <property type="evidence" value="ECO:0000318"/>
    <property type="project" value="GO_Central"/>
</dbReference>
<dbReference type="GO" id="GO:0008188">
    <property type="term" value="F:neuropeptide receptor activity"/>
    <property type="evidence" value="ECO:0000314"/>
    <property type="project" value="WormBase"/>
</dbReference>
<dbReference type="GO" id="GO:0004983">
    <property type="term" value="F:neuropeptide Y receptor activity"/>
    <property type="evidence" value="ECO:0007669"/>
    <property type="project" value="InterPro"/>
</dbReference>
<dbReference type="GO" id="GO:0048149">
    <property type="term" value="P:behavioral response to ethanol"/>
    <property type="evidence" value="ECO:0000315"/>
    <property type="project" value="WormBase"/>
</dbReference>
<dbReference type="GO" id="GO:0007631">
    <property type="term" value="P:feeding behavior"/>
    <property type="evidence" value="ECO:0000315"/>
    <property type="project" value="UniProtKB"/>
</dbReference>
<dbReference type="GO" id="GO:0007186">
    <property type="term" value="P:G protein-coupled receptor signaling pathway"/>
    <property type="evidence" value="ECO:0000318"/>
    <property type="project" value="GO_Central"/>
</dbReference>
<dbReference type="GO" id="GO:0050709">
    <property type="term" value="P:negative regulation of protein secretion"/>
    <property type="evidence" value="ECO:0000315"/>
    <property type="project" value="UniProtKB"/>
</dbReference>
<dbReference type="GO" id="GO:0007218">
    <property type="term" value="P:neuropeptide signaling pathway"/>
    <property type="evidence" value="ECO:0000314"/>
    <property type="project" value="WormBase"/>
</dbReference>
<dbReference type="GO" id="GO:0006937">
    <property type="term" value="P:regulation of muscle contraction"/>
    <property type="evidence" value="ECO:0000316"/>
    <property type="project" value="UniProtKB"/>
</dbReference>
<dbReference type="GO" id="GO:0070482">
    <property type="term" value="P:response to oxygen levels"/>
    <property type="evidence" value="ECO:0000315"/>
    <property type="project" value="WormBase"/>
</dbReference>
<dbReference type="GO" id="GO:0030431">
    <property type="term" value="P:sleep"/>
    <property type="evidence" value="ECO:0000315"/>
    <property type="project" value="UniProtKB"/>
</dbReference>
<dbReference type="GO" id="GO:0035176">
    <property type="term" value="P:social behavior"/>
    <property type="evidence" value="ECO:0000315"/>
    <property type="project" value="UniProtKB"/>
</dbReference>
<dbReference type="GO" id="GO:0043052">
    <property type="term" value="P:thermotaxis"/>
    <property type="evidence" value="ECO:0000315"/>
    <property type="project" value="CACAO"/>
</dbReference>
<dbReference type="CDD" id="cd15203">
    <property type="entry name" value="7tmA_NPYR-like"/>
    <property type="match status" value="1"/>
</dbReference>
<dbReference type="FunFam" id="1.20.1070.10:FF:000484">
    <property type="entry name" value="NeuroPeptide Receptor family"/>
    <property type="match status" value="1"/>
</dbReference>
<dbReference type="Gene3D" id="1.20.1070.10">
    <property type="entry name" value="Rhodopsin 7-helix transmembrane proteins"/>
    <property type="match status" value="1"/>
</dbReference>
<dbReference type="InterPro" id="IPR000276">
    <property type="entry name" value="GPCR_Rhodpsn"/>
</dbReference>
<dbReference type="InterPro" id="IPR017452">
    <property type="entry name" value="GPCR_Rhodpsn_7TM"/>
</dbReference>
<dbReference type="InterPro" id="IPR000611">
    <property type="entry name" value="NPY_rcpt"/>
</dbReference>
<dbReference type="PANTHER" id="PTHR24235:SF27">
    <property type="entry name" value="NEUROPEPTIDE RECEPTOR NPR-1"/>
    <property type="match status" value="1"/>
</dbReference>
<dbReference type="PANTHER" id="PTHR24235">
    <property type="entry name" value="NEUROPEPTIDE Y RECEPTOR"/>
    <property type="match status" value="1"/>
</dbReference>
<dbReference type="Pfam" id="PF00001">
    <property type="entry name" value="7tm_1"/>
    <property type="match status" value="1"/>
</dbReference>
<dbReference type="PRINTS" id="PR00237">
    <property type="entry name" value="GPCRRHODOPSN"/>
</dbReference>
<dbReference type="PRINTS" id="PR01012">
    <property type="entry name" value="NRPEPTIDEYR"/>
</dbReference>
<dbReference type="SMART" id="SM01381">
    <property type="entry name" value="7TM_GPCR_Srsx"/>
    <property type="match status" value="1"/>
</dbReference>
<dbReference type="SUPFAM" id="SSF81321">
    <property type="entry name" value="Family A G protein-coupled receptor-like"/>
    <property type="match status" value="1"/>
</dbReference>
<dbReference type="PROSITE" id="PS00237">
    <property type="entry name" value="G_PROTEIN_RECEP_F1_1"/>
    <property type="match status" value="1"/>
</dbReference>
<dbReference type="PROSITE" id="PS50262">
    <property type="entry name" value="G_PROTEIN_RECEP_F1_2"/>
    <property type="match status" value="1"/>
</dbReference>
<reference evidence="11" key="1">
    <citation type="journal article" date="1998" name="Science">
        <title>Genome sequence of the nematode C. elegans: a platform for investigating biology.</title>
        <authorList>
            <consortium name="The C. elegans sequencing consortium"/>
        </authorList>
    </citation>
    <scope>NUCLEOTIDE SEQUENCE [LARGE SCALE GENOMIC DNA]</scope>
    <source>
        <strain evidence="11">Bristol N2</strain>
    </source>
</reference>
<reference evidence="10" key="2">
    <citation type="journal article" date="1998" name="Cell">
        <title>Natural variation in a neuropeptide Y receptor homolog modifies social behavior and food response in C. elegans.</title>
        <authorList>
            <person name="de Bono M."/>
            <person name="Bargmann C.I."/>
        </authorList>
    </citation>
    <scope>FUNCTION</scope>
    <scope>TISSUE SPECIFICITY</scope>
    <scope>MUTAGENESIS OF 61-GLN--VAL-457; THR-83; GLY-118; THR-144 AND VAL-215</scope>
    <source>
        <strain evidence="6">AB1</strain>
        <strain evidence="6">AB3</strain>
        <strain evidence="11">Bristol N2</strain>
        <strain evidence="6">CB4852</strain>
        <strain evidence="6">CB4853</strain>
        <strain evidence="6">CB4854</strain>
        <strain evidence="6">CB4855</strain>
        <strain evidence="6">CB4856</strain>
        <strain evidence="6">CB4857</strain>
        <strain evidence="6">CB4858</strain>
        <strain evidence="6">CB4932</strain>
        <strain evidence="6">KR314</strain>
        <strain evidence="6">RC301</strain>
        <strain evidence="6">TR403</strain>
    </source>
</reference>
<reference evidence="10" key="3">
    <citation type="journal article" date="2003" name="J. Biol. Chem.">
        <title>Differential activation of 'social' and 'solitary' variants of the Caenorhabditis elegans G protein-coupled receptor NPR-1 by its cognate ligand AF9.</title>
        <authorList>
            <person name="Kubiak T.M."/>
            <person name="Larsen M.J."/>
            <person name="Nulf S.C."/>
            <person name="Zantello M.R."/>
            <person name="Burton K.J."/>
            <person name="Bowman J.W."/>
            <person name="Modric T."/>
            <person name="Lowery D.E."/>
        </authorList>
    </citation>
    <scope>FUNCTION</scope>
    <scope>MUTAGENESIS OF VAL-215</scope>
</reference>
<reference evidence="10" key="4">
    <citation type="journal article" date="2003" name="Nat. Neurosci.">
        <title>Inhibition of Caenorhabditis elegans social feeding by FMRFamide-related peptide activation of NPR-1.</title>
        <authorList>
            <person name="Rogers C."/>
            <person name="Reale V."/>
            <person name="Kim K."/>
            <person name="Chatwin H."/>
            <person name="Li C."/>
            <person name="Evans P."/>
            <person name="de Bono M."/>
        </authorList>
    </citation>
    <scope>FUNCTION</scope>
    <scope>MUTAGENESIS OF VAL-215</scope>
</reference>
<reference evidence="10" key="5">
    <citation type="journal article" date="2013" name="Neuron">
        <title>Analysis of NPR-1 reveals a circuit mechanism for behavioral quiescence in C. elegans.</title>
        <authorList>
            <person name="Choi S."/>
            <person name="Chatzigeorgiou M."/>
            <person name="Taylor K.P."/>
            <person name="Schafer W.R."/>
            <person name="Kaplan J.M."/>
        </authorList>
    </citation>
    <scope>FUNCTION</scope>
</reference>
<reference evidence="10" key="6">
    <citation type="journal article" date="2015" name="Trends Genet.">
        <title>The laboratory domestication of Caenorhabditis elegans.</title>
        <authorList>
            <person name="Sterken M.G."/>
            <person name="Snoek L.B."/>
            <person name="Kammenga J.E."/>
            <person name="Andersen E.C."/>
        </authorList>
    </citation>
    <scope>REVIEW OF FUNCTION</scope>
</reference>
<reference evidence="10" key="7">
    <citation type="journal article" date="2016" name="Genetics">
        <title>The Neuropeptides FLP-2 and PDF-1 Act in Concert To Arouse Caenorhabditis elegans Locomotion.</title>
        <authorList>
            <person name="Chen D."/>
            <person name="Taylor K.P."/>
            <person name="Hall Q."/>
            <person name="Kaplan J.M."/>
        </authorList>
    </citation>
    <scope>FUNCTION</scope>
    <scope>MUTAGENESIS OF 61-GLN--VAL-457</scope>
</reference>
<sequence>MEVENFTDCQVYWKVYPDPSQSIYAIVPFLTVYLFLFFLGLFGNVTLIYVTCSHKALLSVQNIFILNLAASDCMMCILSLPITPITNVYKNWYFGNLLCHLIPCIQGISIFVCTFSLGAIALDRYILVVRPHSTPLSQRGAFLTTVLLWILSFVVTLPYAFNMQMIEYTEERICGYFCTEKWESAKSRRAYTMIVMLAQFVVPFAVMAFCYANIVSVLSKRAQTKIRKMVERTSALESSCAFPSHGLEQYENELNEFLDKQEKEKQRVVLQNRRTTSILVTMVVWFGITWLPHNVISLIIEYDDTQSFFRLYGRDDYDISYLLNLFTHSIAMSNNVLNPVLYAWLNPSFRQLVIKTYFGDRRKSDRIINQTSVYKTKIVHDTKHLNGRAKIGGGGSHEALKERELNSCSENLSYHVNGHTRTPTPEVQLNEVSSPEISKLVAEPEELIEFSVNDTLV</sequence>
<comment type="function">
    <text evidence="2 3 4 5 6">G-protein coupled receptor for FARP(FMRFamide related peptide) neuropeptides (PubMed:12821653, PubMed:14555955). Activated by FARP neuropeptides flp-18 and flp-21 (PubMed:12821653, PubMed:14555955). Plays a role in modulating social and feeding behavior (PubMed:9741632). Required to modulate locomotion quiescence during the sleep-like state called lethargus, which occurs during molting between larval and adult stages, in part by regulating touch sensitivity (PubMed:23764289, PubMed:27585848).</text>
</comment>
<comment type="subcellular location">
    <subcellularLocation>
        <location evidence="1">Membrane</location>
        <topology evidence="1">Multi-pass membrane protein</topology>
    </subcellularLocation>
</comment>
<comment type="tissue specificity">
    <text evidence="6">Expressed in neurons, including neurons in the head, the ventral nerve cord, and the preanal ganglion.</text>
</comment>
<comment type="similarity">
    <text evidence="10">Belongs to the G-protein coupled receptor 1 family.</text>
</comment>
<comment type="caution">
    <text evidence="8">It has been reported that many phenotypes associated with the Bristol N2 reference allele of npr-1 may reflect a neomorphic gain-of-function sensitivity of the receptor to flp-18 in addition to sensitivity to flp-21.</text>
</comment>
<proteinExistence type="evidence at protein level"/>